<reference key="1">
    <citation type="submission" date="2006-03" db="EMBL/GenBank/DDBJ databases">
        <title>Complete genome sequence of Francisella tularensis LVS (Live Vaccine Strain).</title>
        <authorList>
            <person name="Chain P."/>
            <person name="Larimer F."/>
            <person name="Land M."/>
            <person name="Stilwagen S."/>
            <person name="Larsson P."/>
            <person name="Bearden S."/>
            <person name="Chu M."/>
            <person name="Oyston P."/>
            <person name="Forsman M."/>
            <person name="Andersson S."/>
            <person name="Lindler L."/>
            <person name="Titball R."/>
            <person name="Garcia E."/>
        </authorList>
    </citation>
    <scope>NUCLEOTIDE SEQUENCE [LARGE SCALE GENOMIC DNA]</scope>
    <source>
        <strain>LVS</strain>
    </source>
</reference>
<dbReference type="EC" id="6.1.1.5" evidence="1"/>
<dbReference type="EMBL" id="AM233362">
    <property type="protein sequence ID" value="CAJ78876.1"/>
    <property type="molecule type" value="Genomic_DNA"/>
</dbReference>
<dbReference type="RefSeq" id="WP_011457376.1">
    <property type="nucleotide sequence ID" value="NZ_CP009694.1"/>
</dbReference>
<dbReference type="SMR" id="Q2A4Z4"/>
<dbReference type="KEGG" id="ftl:FTL_0436"/>
<dbReference type="Proteomes" id="UP000001944">
    <property type="component" value="Chromosome"/>
</dbReference>
<dbReference type="GO" id="GO:0005829">
    <property type="term" value="C:cytosol"/>
    <property type="evidence" value="ECO:0007669"/>
    <property type="project" value="TreeGrafter"/>
</dbReference>
<dbReference type="GO" id="GO:0002161">
    <property type="term" value="F:aminoacyl-tRNA deacylase activity"/>
    <property type="evidence" value="ECO:0007669"/>
    <property type="project" value="InterPro"/>
</dbReference>
<dbReference type="GO" id="GO:0005524">
    <property type="term" value="F:ATP binding"/>
    <property type="evidence" value="ECO:0007669"/>
    <property type="project" value="UniProtKB-UniRule"/>
</dbReference>
<dbReference type="GO" id="GO:0004822">
    <property type="term" value="F:isoleucine-tRNA ligase activity"/>
    <property type="evidence" value="ECO:0007669"/>
    <property type="project" value="UniProtKB-UniRule"/>
</dbReference>
<dbReference type="GO" id="GO:0000049">
    <property type="term" value="F:tRNA binding"/>
    <property type="evidence" value="ECO:0007669"/>
    <property type="project" value="InterPro"/>
</dbReference>
<dbReference type="GO" id="GO:0008270">
    <property type="term" value="F:zinc ion binding"/>
    <property type="evidence" value="ECO:0007669"/>
    <property type="project" value="UniProtKB-UniRule"/>
</dbReference>
<dbReference type="GO" id="GO:0006428">
    <property type="term" value="P:isoleucyl-tRNA aminoacylation"/>
    <property type="evidence" value="ECO:0007669"/>
    <property type="project" value="UniProtKB-UniRule"/>
</dbReference>
<dbReference type="CDD" id="cd07960">
    <property type="entry name" value="Anticodon_Ia_Ile_BEm"/>
    <property type="match status" value="1"/>
</dbReference>
<dbReference type="CDD" id="cd00818">
    <property type="entry name" value="IleRS_core"/>
    <property type="match status" value="1"/>
</dbReference>
<dbReference type="FunFam" id="1.10.730.20:FF:000001">
    <property type="entry name" value="Isoleucine--tRNA ligase"/>
    <property type="match status" value="1"/>
</dbReference>
<dbReference type="FunFam" id="3.40.50.620:FF:000042">
    <property type="entry name" value="Isoleucine--tRNA ligase"/>
    <property type="match status" value="1"/>
</dbReference>
<dbReference type="FunFam" id="3.40.50.620:FF:000048">
    <property type="entry name" value="Isoleucine--tRNA ligase"/>
    <property type="match status" value="1"/>
</dbReference>
<dbReference type="Gene3D" id="1.10.730.20">
    <property type="match status" value="1"/>
</dbReference>
<dbReference type="Gene3D" id="3.40.50.620">
    <property type="entry name" value="HUPs"/>
    <property type="match status" value="2"/>
</dbReference>
<dbReference type="Gene3D" id="3.90.740.10">
    <property type="entry name" value="Valyl/Leucyl/Isoleucyl-tRNA synthetase, editing domain"/>
    <property type="match status" value="1"/>
</dbReference>
<dbReference type="HAMAP" id="MF_02002">
    <property type="entry name" value="Ile_tRNA_synth_type1"/>
    <property type="match status" value="1"/>
</dbReference>
<dbReference type="InterPro" id="IPR001412">
    <property type="entry name" value="aa-tRNA-synth_I_CS"/>
</dbReference>
<dbReference type="InterPro" id="IPR002300">
    <property type="entry name" value="aa-tRNA-synth_Ia"/>
</dbReference>
<dbReference type="InterPro" id="IPR033708">
    <property type="entry name" value="Anticodon_Ile_BEm"/>
</dbReference>
<dbReference type="InterPro" id="IPR002301">
    <property type="entry name" value="Ile-tRNA-ligase"/>
</dbReference>
<dbReference type="InterPro" id="IPR023585">
    <property type="entry name" value="Ile-tRNA-ligase_type1"/>
</dbReference>
<dbReference type="InterPro" id="IPR050081">
    <property type="entry name" value="Ile-tRNA_ligase"/>
</dbReference>
<dbReference type="InterPro" id="IPR013155">
    <property type="entry name" value="M/V/L/I-tRNA-synth_anticd-bd"/>
</dbReference>
<dbReference type="InterPro" id="IPR014729">
    <property type="entry name" value="Rossmann-like_a/b/a_fold"/>
</dbReference>
<dbReference type="InterPro" id="IPR009080">
    <property type="entry name" value="tRNAsynth_Ia_anticodon-bd"/>
</dbReference>
<dbReference type="InterPro" id="IPR009008">
    <property type="entry name" value="Val/Leu/Ile-tRNA-synth_edit"/>
</dbReference>
<dbReference type="InterPro" id="IPR010663">
    <property type="entry name" value="Znf_FPG/IleRS"/>
</dbReference>
<dbReference type="NCBIfam" id="TIGR00392">
    <property type="entry name" value="ileS"/>
    <property type="match status" value="1"/>
</dbReference>
<dbReference type="PANTHER" id="PTHR42765:SF1">
    <property type="entry name" value="ISOLEUCINE--TRNA LIGASE, MITOCHONDRIAL"/>
    <property type="match status" value="1"/>
</dbReference>
<dbReference type="PANTHER" id="PTHR42765">
    <property type="entry name" value="SOLEUCYL-TRNA SYNTHETASE"/>
    <property type="match status" value="1"/>
</dbReference>
<dbReference type="Pfam" id="PF08264">
    <property type="entry name" value="Anticodon_1"/>
    <property type="match status" value="1"/>
</dbReference>
<dbReference type="Pfam" id="PF00133">
    <property type="entry name" value="tRNA-synt_1"/>
    <property type="match status" value="1"/>
</dbReference>
<dbReference type="Pfam" id="PF06827">
    <property type="entry name" value="zf-FPG_IleRS"/>
    <property type="match status" value="1"/>
</dbReference>
<dbReference type="PRINTS" id="PR00984">
    <property type="entry name" value="TRNASYNTHILE"/>
</dbReference>
<dbReference type="SUPFAM" id="SSF47323">
    <property type="entry name" value="Anticodon-binding domain of a subclass of class I aminoacyl-tRNA synthetases"/>
    <property type="match status" value="1"/>
</dbReference>
<dbReference type="SUPFAM" id="SSF52374">
    <property type="entry name" value="Nucleotidylyl transferase"/>
    <property type="match status" value="1"/>
</dbReference>
<dbReference type="SUPFAM" id="SSF50677">
    <property type="entry name" value="ValRS/IleRS/LeuRS editing domain"/>
    <property type="match status" value="1"/>
</dbReference>
<dbReference type="PROSITE" id="PS00178">
    <property type="entry name" value="AA_TRNA_LIGASE_I"/>
    <property type="match status" value="1"/>
</dbReference>
<name>SYI_FRATH</name>
<comment type="function">
    <text evidence="1">Catalyzes the attachment of isoleucine to tRNA(Ile). As IleRS can inadvertently accommodate and process structurally similar amino acids such as valine, to avoid such errors it has two additional distinct tRNA(Ile)-dependent editing activities. One activity is designated as 'pretransfer' editing and involves the hydrolysis of activated Val-AMP. The other activity is designated 'posttransfer' editing and involves deacylation of mischarged Val-tRNA(Ile).</text>
</comment>
<comment type="catalytic activity">
    <reaction evidence="1">
        <text>tRNA(Ile) + L-isoleucine + ATP = L-isoleucyl-tRNA(Ile) + AMP + diphosphate</text>
        <dbReference type="Rhea" id="RHEA:11060"/>
        <dbReference type="Rhea" id="RHEA-COMP:9666"/>
        <dbReference type="Rhea" id="RHEA-COMP:9695"/>
        <dbReference type="ChEBI" id="CHEBI:30616"/>
        <dbReference type="ChEBI" id="CHEBI:33019"/>
        <dbReference type="ChEBI" id="CHEBI:58045"/>
        <dbReference type="ChEBI" id="CHEBI:78442"/>
        <dbReference type="ChEBI" id="CHEBI:78528"/>
        <dbReference type="ChEBI" id="CHEBI:456215"/>
        <dbReference type="EC" id="6.1.1.5"/>
    </reaction>
</comment>
<comment type="cofactor">
    <cofactor evidence="1">
        <name>Zn(2+)</name>
        <dbReference type="ChEBI" id="CHEBI:29105"/>
    </cofactor>
    <text evidence="1">Binds 1 zinc ion per subunit.</text>
</comment>
<comment type="subunit">
    <text evidence="1">Monomer.</text>
</comment>
<comment type="subcellular location">
    <subcellularLocation>
        <location evidence="1">Cytoplasm</location>
    </subcellularLocation>
</comment>
<comment type="domain">
    <text evidence="1">IleRS has two distinct active sites: one for aminoacylation and one for editing. The misactivated valine is translocated from the active site to the editing site, which sterically excludes the correctly activated isoleucine. The single editing site contains two valyl binding pockets, one specific for each substrate (Val-AMP or Val-tRNA(Ile)).</text>
</comment>
<comment type="similarity">
    <text evidence="1">Belongs to the class-I aminoacyl-tRNA synthetase family. IleS type 1 subfamily.</text>
</comment>
<protein>
    <recommendedName>
        <fullName evidence="1">Isoleucine--tRNA ligase</fullName>
        <ecNumber evidence="1">6.1.1.5</ecNumber>
    </recommendedName>
    <alternativeName>
        <fullName evidence="1">Isoleucyl-tRNA synthetase</fullName>
        <shortName evidence="1">IleRS</shortName>
    </alternativeName>
</protein>
<keyword id="KW-0030">Aminoacyl-tRNA synthetase</keyword>
<keyword id="KW-0067">ATP-binding</keyword>
<keyword id="KW-0963">Cytoplasm</keyword>
<keyword id="KW-0436">Ligase</keyword>
<keyword id="KW-0479">Metal-binding</keyword>
<keyword id="KW-0547">Nucleotide-binding</keyword>
<keyword id="KW-0648">Protein biosynthesis</keyword>
<keyword id="KW-1185">Reference proteome</keyword>
<keyword id="KW-0862">Zinc</keyword>
<sequence length="935" mass="106972">MSDYKDTLNLPKTSFSMKGNLANKEPMILNKWEKQGIYKKIREHFAGREKFVLHDGPPYANGSIHVGHAVNKILKDIIIKSKTLSGYDAPFTPTWDCHGLPIELQVEKKHGKAGQSISEDDFRKECRKYAKKQVEIQKKDFKRLGVLGDWEQPYLTMNFDYEANMIRTLAKIIENGHLSKGFKPVHWCTDCGSALAEAEVEYADKVSPAIDVKFKIKDKDKLAQAFGLDSLNHDAFAIIWTTTPWTLPANQAIAVNNQLNYSLIKIEDFYIILAENLVEQTLKRYAIENAQIIATTTGNKLTGIIAEHPFYSRHVPILHGDHVTDDSGTGLVHTAPTHGVDDFTLGKEHNLSMEIFVKGNGCYSENTKLFAGEFIFKASDRIIELLGEKKRLMNSDKIKHSYPHCWRHKTPLMFRATPQWFISMEKQGLRDKALQTIKETSWAPSWGQARIEGMVKDRPDWCISRQRTWGVPLPLFIHKETEELHPNTIEILHKVAEKIEKDGIEAWFNADDCEFITETAQYKSVKDTLDVWFDSGSSSMCILDLDKRLSYPADLYLEGSDQHRGWFQTSLLVAMSAKGSQPYKEVFTHGFVVDEHGRKMSKSLGNVTSPQDIYNTLGADILRLWTASTDYKSEMAVSDQILKRTADTYRRLRNTARFLLSNLDGFNPVTDIIEFDKLVKLDQWAIAKTKEFQDKIIEAYDKYQTHTVAQLIHHFCSIEMGSFYLDIIKDRQYTAKTDGHPRKSAQTAIYHIVHALVRWMAPILSFTADEIWDATPKTTDLPIQLCEWYTGLKSFDQDAELDLEYWAKIQEIRSEVNRVLEIKRNEDVIKASLEAEITIYADKYNYKLLEKLGNELRFLLISSKADLKVIEESTSSSIAANILGLLIEITKIEEPKCERCWHRSSTVGDNPQYKDICSRCVENITTEAGESREFA</sequence>
<proteinExistence type="inferred from homology"/>
<feature type="chain" id="PRO_1000022067" description="Isoleucine--tRNA ligase">
    <location>
        <begin position="1"/>
        <end position="935"/>
    </location>
</feature>
<feature type="short sequence motif" description="'HIGH' region">
    <location>
        <begin position="58"/>
        <end position="68"/>
    </location>
</feature>
<feature type="short sequence motif" description="'KMSKS' region">
    <location>
        <begin position="599"/>
        <end position="603"/>
    </location>
</feature>
<feature type="binding site" evidence="1">
    <location>
        <position position="558"/>
    </location>
    <ligand>
        <name>L-isoleucyl-5'-AMP</name>
        <dbReference type="ChEBI" id="CHEBI:178002"/>
    </ligand>
</feature>
<feature type="binding site" evidence="1">
    <location>
        <position position="602"/>
    </location>
    <ligand>
        <name>ATP</name>
        <dbReference type="ChEBI" id="CHEBI:30616"/>
    </ligand>
</feature>
<feature type="binding site" evidence="1">
    <location>
        <position position="897"/>
    </location>
    <ligand>
        <name>Zn(2+)</name>
        <dbReference type="ChEBI" id="CHEBI:29105"/>
    </ligand>
</feature>
<feature type="binding site" evidence="1">
    <location>
        <position position="900"/>
    </location>
    <ligand>
        <name>Zn(2+)</name>
        <dbReference type="ChEBI" id="CHEBI:29105"/>
    </ligand>
</feature>
<feature type="binding site" evidence="1">
    <location>
        <position position="917"/>
    </location>
    <ligand>
        <name>Zn(2+)</name>
        <dbReference type="ChEBI" id="CHEBI:29105"/>
    </ligand>
</feature>
<feature type="binding site" evidence="1">
    <location>
        <position position="920"/>
    </location>
    <ligand>
        <name>Zn(2+)</name>
        <dbReference type="ChEBI" id="CHEBI:29105"/>
    </ligand>
</feature>
<organism>
    <name type="scientific">Francisella tularensis subsp. holarctica (strain LVS)</name>
    <dbReference type="NCBI Taxonomy" id="376619"/>
    <lineage>
        <taxon>Bacteria</taxon>
        <taxon>Pseudomonadati</taxon>
        <taxon>Pseudomonadota</taxon>
        <taxon>Gammaproteobacteria</taxon>
        <taxon>Thiotrichales</taxon>
        <taxon>Francisellaceae</taxon>
        <taxon>Francisella</taxon>
    </lineage>
</organism>
<gene>
    <name evidence="1" type="primary">ileS</name>
    <name type="ordered locus">FTL_0436</name>
</gene>
<evidence type="ECO:0000255" key="1">
    <source>
        <dbReference type="HAMAP-Rule" id="MF_02002"/>
    </source>
</evidence>
<accession>Q2A4Z4</accession>